<name>YFJX_ECOLI</name>
<organism>
    <name type="scientific">Escherichia coli (strain K12)</name>
    <dbReference type="NCBI Taxonomy" id="83333"/>
    <lineage>
        <taxon>Bacteria</taxon>
        <taxon>Pseudomonadati</taxon>
        <taxon>Pseudomonadota</taxon>
        <taxon>Gammaproteobacteria</taxon>
        <taxon>Enterobacterales</taxon>
        <taxon>Enterobacteriaceae</taxon>
        <taxon>Escherichia</taxon>
    </lineage>
</organism>
<evidence type="ECO:0000305" key="1"/>
<sequence>MTTQTQYDLVPANGSEFELSVTQVPDEQHIRFWPQHFGTIPQWITLEPRIFAWMDRFCDEYCGGIWSFYTLSNGGAFMAPDADGDDKWHLLNGMNGNGAEMSAEAAGIAVCLIEYSHHACLTECDAMTEHYYRLRDYALQHPESSAIMRIID</sequence>
<reference key="1">
    <citation type="journal article" date="1997" name="DNA Res.">
        <title>Construction of a contiguous 874-kb sequence of the Escherichia coli-K12 genome corresponding to 50.0-68.8 min on the linkage map and analysis of its sequence features.</title>
        <authorList>
            <person name="Yamamoto Y."/>
            <person name="Aiba H."/>
            <person name="Baba T."/>
            <person name="Hayashi K."/>
            <person name="Inada T."/>
            <person name="Isono K."/>
            <person name="Itoh T."/>
            <person name="Kimura S."/>
            <person name="Kitagawa M."/>
            <person name="Makino K."/>
            <person name="Miki T."/>
            <person name="Mitsuhashi N."/>
            <person name="Mizobuchi K."/>
            <person name="Mori H."/>
            <person name="Nakade S."/>
            <person name="Nakamura Y."/>
            <person name="Nashimoto H."/>
            <person name="Oshima T."/>
            <person name="Oyama S."/>
            <person name="Saito N."/>
            <person name="Sampei G."/>
            <person name="Satoh Y."/>
            <person name="Sivasundaram S."/>
            <person name="Tagami H."/>
            <person name="Takahashi H."/>
            <person name="Takeda J."/>
            <person name="Takemoto K."/>
            <person name="Uehara K."/>
            <person name="Wada C."/>
            <person name="Yamagata S."/>
            <person name="Horiuchi T."/>
        </authorList>
    </citation>
    <scope>NUCLEOTIDE SEQUENCE [LARGE SCALE GENOMIC DNA]</scope>
    <source>
        <strain>K12 / W3110 / ATCC 27325 / DSM 5911</strain>
    </source>
</reference>
<reference key="2">
    <citation type="journal article" date="1997" name="Science">
        <title>The complete genome sequence of Escherichia coli K-12.</title>
        <authorList>
            <person name="Blattner F.R."/>
            <person name="Plunkett G. III"/>
            <person name="Bloch C.A."/>
            <person name="Perna N.T."/>
            <person name="Burland V."/>
            <person name="Riley M."/>
            <person name="Collado-Vides J."/>
            <person name="Glasner J.D."/>
            <person name="Rode C.K."/>
            <person name="Mayhew G.F."/>
            <person name="Gregor J."/>
            <person name="Davis N.W."/>
            <person name="Kirkpatrick H.A."/>
            <person name="Goeden M.A."/>
            <person name="Rose D.J."/>
            <person name="Mau B."/>
            <person name="Shao Y."/>
        </authorList>
    </citation>
    <scope>NUCLEOTIDE SEQUENCE [LARGE SCALE GENOMIC DNA]</scope>
    <source>
        <strain>K12 / MG1655 / ATCC 47076</strain>
    </source>
</reference>
<reference key="3">
    <citation type="journal article" date="2006" name="Mol. Syst. Biol.">
        <title>Highly accurate genome sequences of Escherichia coli K-12 strains MG1655 and W3110.</title>
        <authorList>
            <person name="Hayashi K."/>
            <person name="Morooka N."/>
            <person name="Yamamoto Y."/>
            <person name="Fujita K."/>
            <person name="Isono K."/>
            <person name="Choi S."/>
            <person name="Ohtsubo E."/>
            <person name="Baba T."/>
            <person name="Wanner B.L."/>
            <person name="Mori H."/>
            <person name="Horiuchi T."/>
        </authorList>
    </citation>
    <scope>NUCLEOTIDE SEQUENCE [LARGE SCALE GENOMIC DNA]</scope>
    <source>
        <strain>K12 / W3110 / ATCC 27325 / DSM 5911</strain>
    </source>
</reference>
<protein>
    <recommendedName>
        <fullName>Uncharacterized protein YfjX</fullName>
    </recommendedName>
</protein>
<keyword id="KW-1185">Reference proteome</keyword>
<feature type="chain" id="PRO_0000169284" description="Uncharacterized protein YfjX">
    <location>
        <begin position="1"/>
        <end position="152"/>
    </location>
</feature>
<proteinExistence type="inferred from homology"/>
<dbReference type="EMBL" id="U36840">
    <property type="protein sequence ID" value="AAA79811.1"/>
    <property type="molecule type" value="Genomic_DNA"/>
</dbReference>
<dbReference type="EMBL" id="U00096">
    <property type="protein sequence ID" value="AAC75691.1"/>
    <property type="molecule type" value="Genomic_DNA"/>
</dbReference>
<dbReference type="EMBL" id="AP009048">
    <property type="protein sequence ID" value="BAA16511.1"/>
    <property type="molecule type" value="Genomic_DNA"/>
</dbReference>
<dbReference type="PIR" id="E65043">
    <property type="entry name" value="E65043"/>
</dbReference>
<dbReference type="RefSeq" id="NP_417130.1">
    <property type="nucleotide sequence ID" value="NC_000913.3"/>
</dbReference>
<dbReference type="RefSeq" id="WP_000211841.1">
    <property type="nucleotide sequence ID" value="NZ_LN832404.1"/>
</dbReference>
<dbReference type="SMR" id="P52139"/>
<dbReference type="BioGRID" id="4262250">
    <property type="interactions" value="14"/>
</dbReference>
<dbReference type="FunCoup" id="P52139">
    <property type="interactions" value="155"/>
</dbReference>
<dbReference type="IntAct" id="P52139">
    <property type="interactions" value="3"/>
</dbReference>
<dbReference type="STRING" id="511145.b2643"/>
<dbReference type="PaxDb" id="511145-b2643"/>
<dbReference type="EnsemblBacteria" id="AAC75691">
    <property type="protein sequence ID" value="AAC75691"/>
    <property type="gene ID" value="b2643"/>
</dbReference>
<dbReference type="GeneID" id="947126"/>
<dbReference type="KEGG" id="ecj:JW2624"/>
<dbReference type="KEGG" id="eco:b2643"/>
<dbReference type="KEGG" id="ecoc:C3026_14605"/>
<dbReference type="PATRIC" id="fig|1411691.4.peg.4096"/>
<dbReference type="EchoBASE" id="EB3002"/>
<dbReference type="eggNOG" id="ENOG502ZPKK">
    <property type="taxonomic scope" value="Bacteria"/>
</dbReference>
<dbReference type="HOGENOM" id="CLU_085306_1_0_6"/>
<dbReference type="InParanoid" id="P52139"/>
<dbReference type="OMA" id="IGFWPQH"/>
<dbReference type="OrthoDB" id="1164967at2"/>
<dbReference type="PhylomeDB" id="P52139"/>
<dbReference type="BioCyc" id="EcoCyc:G7378-MONOMER"/>
<dbReference type="PRO" id="PR:P52139"/>
<dbReference type="Proteomes" id="UP000000625">
    <property type="component" value="Chromosome"/>
</dbReference>
<dbReference type="Gene3D" id="3.30.70.3580">
    <property type="entry name" value="Antirestriction protein"/>
    <property type="match status" value="1"/>
</dbReference>
<dbReference type="InterPro" id="IPR004914">
    <property type="entry name" value="Antirestrict"/>
</dbReference>
<dbReference type="InterPro" id="IPR042297">
    <property type="entry name" value="Antirestriction_sf"/>
</dbReference>
<dbReference type="Pfam" id="PF03230">
    <property type="entry name" value="Antirestrict"/>
    <property type="match status" value="1"/>
</dbReference>
<accession>P52139</accession>
<comment type="similarity">
    <text evidence="1">Belongs to the antirestriction protein family.</text>
</comment>
<gene>
    <name type="primary">yfjX</name>
    <name type="ordered locus">b2643</name>
    <name type="ordered locus">JW2624</name>
</gene>